<comment type="function">
    <text evidence="1">Catalyzes the hydroxylation of 2-nonaprenyl-3-methyl-6-methoxy-1,4-benzoquinol during ubiquinone biosynthesis.</text>
</comment>
<comment type="catalytic activity">
    <reaction evidence="1">
        <text>a 5-methoxy-2-methyl-3-(all-trans-polyprenyl)benzene-1,4-diol + AH2 + O2 = a 3-demethylubiquinol + A + H2O</text>
        <dbReference type="Rhea" id="RHEA:50908"/>
        <dbReference type="Rhea" id="RHEA-COMP:10859"/>
        <dbReference type="Rhea" id="RHEA-COMP:10914"/>
        <dbReference type="ChEBI" id="CHEBI:13193"/>
        <dbReference type="ChEBI" id="CHEBI:15377"/>
        <dbReference type="ChEBI" id="CHEBI:15379"/>
        <dbReference type="ChEBI" id="CHEBI:17499"/>
        <dbReference type="ChEBI" id="CHEBI:84167"/>
        <dbReference type="ChEBI" id="CHEBI:84422"/>
        <dbReference type="EC" id="1.14.99.60"/>
    </reaction>
</comment>
<comment type="cofactor">
    <cofactor evidence="1">
        <name>Fe cation</name>
        <dbReference type="ChEBI" id="CHEBI:24875"/>
    </cofactor>
    <text evidence="1">Binds 2 iron ions per subunit.</text>
</comment>
<comment type="pathway">
    <text evidence="1">Cofactor biosynthesis; ubiquinone biosynthesis.</text>
</comment>
<comment type="subcellular location">
    <subcellularLocation>
        <location evidence="1">Cell membrane</location>
        <topology evidence="1">Peripheral membrane protein</topology>
    </subcellularLocation>
</comment>
<comment type="similarity">
    <text evidence="1">Belongs to the COQ7 family.</text>
</comment>
<name>COQ7_METPP</name>
<keyword id="KW-1003">Cell membrane</keyword>
<keyword id="KW-0408">Iron</keyword>
<keyword id="KW-0472">Membrane</keyword>
<keyword id="KW-0479">Metal-binding</keyword>
<keyword id="KW-0503">Monooxygenase</keyword>
<keyword id="KW-0560">Oxidoreductase</keyword>
<keyword id="KW-1185">Reference proteome</keyword>
<keyword id="KW-0831">Ubiquinone biosynthesis</keyword>
<accession>A2SKI7</accession>
<reference key="1">
    <citation type="journal article" date="2007" name="J. Bacteriol.">
        <title>Whole-genome analysis of the methyl tert-butyl ether-degrading beta-proteobacterium Methylibium petroleiphilum PM1.</title>
        <authorList>
            <person name="Kane S.R."/>
            <person name="Chakicherla A.Y."/>
            <person name="Chain P.S.G."/>
            <person name="Schmidt R."/>
            <person name="Shin M.W."/>
            <person name="Legler T.C."/>
            <person name="Scow K.M."/>
            <person name="Larimer F.W."/>
            <person name="Lucas S.M."/>
            <person name="Richardson P.M."/>
            <person name="Hristova K.R."/>
        </authorList>
    </citation>
    <scope>NUCLEOTIDE SEQUENCE [LARGE SCALE GENOMIC DNA]</scope>
    <source>
        <strain>ATCC BAA-1232 / LMG 22953 / PM1</strain>
    </source>
</reference>
<sequence>MRSLSRTDQVISSLDKALSTVFAAHSASRPAPKPAVDPGLAMTPQDKSLSASLMRVNHVGEVCAQALYASQALGTRNETLRAQFEHAAREETDHLAWTEARLAELNGRTSWLNPLWYAGAFGLGLIAGRLGDAASLGFVVETERQVEQHLLQHLDRLPVADVESRAIVAQMREDEARHAAAAEHAGAATLPVPVRWMMRGMAKLMTSTAHRI</sequence>
<gene>
    <name evidence="1" type="primary">coq7</name>
    <name type="ordered locus">Mpe_A3123</name>
</gene>
<protein>
    <recommendedName>
        <fullName evidence="1">3-demethoxyubiquinol 3-hydroxylase</fullName>
        <shortName evidence="1">DMQ hydroxylase</shortName>
        <ecNumber evidence="1">1.14.99.60</ecNumber>
    </recommendedName>
    <alternativeName>
        <fullName evidence="1">2-nonaprenyl-3-methyl-6-methoxy-1,4-benzoquinol hydroxylase</fullName>
    </alternativeName>
</protein>
<proteinExistence type="inferred from homology"/>
<evidence type="ECO:0000255" key="1">
    <source>
        <dbReference type="HAMAP-Rule" id="MF_01658"/>
    </source>
</evidence>
<dbReference type="EC" id="1.14.99.60" evidence="1"/>
<dbReference type="EMBL" id="CP000555">
    <property type="protein sequence ID" value="ABM96076.1"/>
    <property type="molecule type" value="Genomic_DNA"/>
</dbReference>
<dbReference type="RefSeq" id="WP_011830699.1">
    <property type="nucleotide sequence ID" value="NC_008825.1"/>
</dbReference>
<dbReference type="SMR" id="A2SKI7"/>
<dbReference type="STRING" id="420662.Mpe_A3123"/>
<dbReference type="KEGG" id="mpt:Mpe_A3123"/>
<dbReference type="eggNOG" id="COG2941">
    <property type="taxonomic scope" value="Bacteria"/>
</dbReference>
<dbReference type="HOGENOM" id="CLU_088601_0_0_4"/>
<dbReference type="UniPathway" id="UPA00232"/>
<dbReference type="Proteomes" id="UP000000366">
    <property type="component" value="Chromosome"/>
</dbReference>
<dbReference type="GO" id="GO:0005886">
    <property type="term" value="C:plasma membrane"/>
    <property type="evidence" value="ECO:0007669"/>
    <property type="project" value="UniProtKB-SubCell"/>
</dbReference>
<dbReference type="GO" id="GO:0008682">
    <property type="term" value="F:3-demethoxyubiquinol 3-hydroxylase activity"/>
    <property type="evidence" value="ECO:0007669"/>
    <property type="project" value="UniProtKB-EC"/>
</dbReference>
<dbReference type="GO" id="GO:0046872">
    <property type="term" value="F:metal ion binding"/>
    <property type="evidence" value="ECO:0007669"/>
    <property type="project" value="UniProtKB-KW"/>
</dbReference>
<dbReference type="GO" id="GO:0006744">
    <property type="term" value="P:ubiquinone biosynthetic process"/>
    <property type="evidence" value="ECO:0007669"/>
    <property type="project" value="UniProtKB-UniRule"/>
</dbReference>
<dbReference type="CDD" id="cd01042">
    <property type="entry name" value="DMQH"/>
    <property type="match status" value="1"/>
</dbReference>
<dbReference type="Gene3D" id="1.20.1260.10">
    <property type="match status" value="1"/>
</dbReference>
<dbReference type="HAMAP" id="MF_01658">
    <property type="entry name" value="COQ7"/>
    <property type="match status" value="1"/>
</dbReference>
<dbReference type="InterPro" id="IPR047809">
    <property type="entry name" value="COQ7_proteobact"/>
</dbReference>
<dbReference type="InterPro" id="IPR012347">
    <property type="entry name" value="Ferritin-like"/>
</dbReference>
<dbReference type="InterPro" id="IPR009078">
    <property type="entry name" value="Ferritin-like_SF"/>
</dbReference>
<dbReference type="InterPro" id="IPR011566">
    <property type="entry name" value="Ubq_synth_Coq7"/>
</dbReference>
<dbReference type="NCBIfam" id="NF033656">
    <property type="entry name" value="DMQ_monoox_COQ7"/>
    <property type="match status" value="1"/>
</dbReference>
<dbReference type="PANTHER" id="PTHR11237:SF4">
    <property type="entry name" value="5-DEMETHOXYUBIQUINONE HYDROXYLASE, MITOCHONDRIAL"/>
    <property type="match status" value="1"/>
</dbReference>
<dbReference type="PANTHER" id="PTHR11237">
    <property type="entry name" value="COENZYME Q10 BIOSYNTHESIS PROTEIN 7"/>
    <property type="match status" value="1"/>
</dbReference>
<dbReference type="Pfam" id="PF03232">
    <property type="entry name" value="COQ7"/>
    <property type="match status" value="1"/>
</dbReference>
<dbReference type="SUPFAM" id="SSF47240">
    <property type="entry name" value="Ferritin-like"/>
    <property type="match status" value="1"/>
</dbReference>
<feature type="chain" id="PRO_0000338699" description="3-demethoxyubiquinol 3-hydroxylase">
    <location>
        <begin position="1"/>
        <end position="212"/>
    </location>
</feature>
<feature type="binding site" evidence="1">
    <location>
        <position position="61"/>
    </location>
    <ligand>
        <name>Fe cation</name>
        <dbReference type="ChEBI" id="CHEBI:24875"/>
        <label>1</label>
    </ligand>
</feature>
<feature type="binding site" evidence="1">
    <location>
        <position position="91"/>
    </location>
    <ligand>
        <name>Fe cation</name>
        <dbReference type="ChEBI" id="CHEBI:24875"/>
        <label>1</label>
    </ligand>
</feature>
<feature type="binding site" evidence="1">
    <location>
        <position position="91"/>
    </location>
    <ligand>
        <name>Fe cation</name>
        <dbReference type="ChEBI" id="CHEBI:24875"/>
        <label>2</label>
    </ligand>
</feature>
<feature type="binding site" evidence="1">
    <location>
        <position position="94"/>
    </location>
    <ligand>
        <name>Fe cation</name>
        <dbReference type="ChEBI" id="CHEBI:24875"/>
        <label>1</label>
    </ligand>
</feature>
<feature type="binding site" evidence="1">
    <location>
        <position position="143"/>
    </location>
    <ligand>
        <name>Fe cation</name>
        <dbReference type="ChEBI" id="CHEBI:24875"/>
        <label>2</label>
    </ligand>
</feature>
<feature type="binding site" evidence="1">
    <location>
        <position position="175"/>
    </location>
    <ligand>
        <name>Fe cation</name>
        <dbReference type="ChEBI" id="CHEBI:24875"/>
        <label>1</label>
    </ligand>
</feature>
<feature type="binding site" evidence="1">
    <location>
        <position position="175"/>
    </location>
    <ligand>
        <name>Fe cation</name>
        <dbReference type="ChEBI" id="CHEBI:24875"/>
        <label>2</label>
    </ligand>
</feature>
<feature type="binding site" evidence="1">
    <location>
        <position position="178"/>
    </location>
    <ligand>
        <name>Fe cation</name>
        <dbReference type="ChEBI" id="CHEBI:24875"/>
        <label>2</label>
    </ligand>
</feature>
<organism>
    <name type="scientific">Methylibium petroleiphilum (strain ATCC BAA-1232 / LMG 22953 / PM1)</name>
    <dbReference type="NCBI Taxonomy" id="420662"/>
    <lineage>
        <taxon>Bacteria</taxon>
        <taxon>Pseudomonadati</taxon>
        <taxon>Pseudomonadota</taxon>
        <taxon>Betaproteobacteria</taxon>
        <taxon>Burkholderiales</taxon>
        <taxon>Sphaerotilaceae</taxon>
        <taxon>Methylibium</taxon>
    </lineage>
</organism>